<name>PINL_HUMAN</name>
<proteinExistence type="uncertain"/>
<accession>O15428</accession>
<accession>B2RBW1</accession>
<accession>Q5VW75</accession>
<feature type="chain" id="PRO_0000193437" description="Putative PIN1-like protein">
    <location>
        <begin position="1"/>
        <end position="100"/>
    </location>
</feature>
<feature type="domain" description="WW" evidence="1">
    <location>
        <begin position="5"/>
        <end position="38"/>
    </location>
</feature>
<feature type="region of interest" description="Disordered" evidence="2">
    <location>
        <begin position="1"/>
        <end position="52"/>
    </location>
</feature>
<feature type="region of interest" description="Disordered" evidence="2">
    <location>
        <begin position="69"/>
        <end position="100"/>
    </location>
</feature>
<feature type="compositionally biased region" description="Basic and acidic residues" evidence="2">
    <location>
        <begin position="1"/>
        <end position="15"/>
    </location>
</feature>
<feature type="compositionally biased region" description="Polar residues" evidence="2">
    <location>
        <begin position="27"/>
        <end position="44"/>
    </location>
</feature>
<feature type="compositionally biased region" description="Basic and acidic residues" evidence="2">
    <location>
        <begin position="87"/>
        <end position="100"/>
    </location>
</feature>
<comment type="caution">
    <text evidence="3">Could be the product of a pseudogene.</text>
</comment>
<keyword id="KW-1185">Reference proteome</keyword>
<sequence>MADEEKLPPGWEKRMSRPSGRGYYFNHITNPSQWERPSGNSSSGGKIWQGEPARVRRSHLLVKPVKAALDLAAGNHPDQGGGPGADQRLHPEDQGRREGL</sequence>
<evidence type="ECO:0000255" key="1">
    <source>
        <dbReference type="PROSITE-ProRule" id="PRU00224"/>
    </source>
</evidence>
<evidence type="ECO:0000256" key="2">
    <source>
        <dbReference type="SAM" id="MobiDB-lite"/>
    </source>
</evidence>
<evidence type="ECO:0000305" key="3"/>
<reference key="1">
    <citation type="journal article" date="1997" name="Genomics">
        <title>The human PIN1 peptidyl-prolyl cis/trans isomerase gene maps to human chromosome 19p13 and the closely related PIN1L gene to 1p31.</title>
        <authorList>
            <person name="Campbell H.D."/>
            <person name="Webb G.C."/>
            <person name="Fountain S."/>
            <person name="Young I.G."/>
        </authorList>
    </citation>
    <scope>NUCLEOTIDE SEQUENCE [MRNA]</scope>
</reference>
<reference key="2">
    <citation type="journal article" date="2004" name="Nat. Genet.">
        <title>Complete sequencing and characterization of 21,243 full-length human cDNAs.</title>
        <authorList>
            <person name="Ota T."/>
            <person name="Suzuki Y."/>
            <person name="Nishikawa T."/>
            <person name="Otsuki T."/>
            <person name="Sugiyama T."/>
            <person name="Irie R."/>
            <person name="Wakamatsu A."/>
            <person name="Hayashi K."/>
            <person name="Sato H."/>
            <person name="Nagai K."/>
            <person name="Kimura K."/>
            <person name="Makita H."/>
            <person name="Sekine M."/>
            <person name="Obayashi M."/>
            <person name="Nishi T."/>
            <person name="Shibahara T."/>
            <person name="Tanaka T."/>
            <person name="Ishii S."/>
            <person name="Yamamoto J."/>
            <person name="Saito K."/>
            <person name="Kawai Y."/>
            <person name="Isono Y."/>
            <person name="Nakamura Y."/>
            <person name="Nagahari K."/>
            <person name="Murakami K."/>
            <person name="Yasuda T."/>
            <person name="Iwayanagi T."/>
            <person name="Wagatsuma M."/>
            <person name="Shiratori A."/>
            <person name="Sudo H."/>
            <person name="Hosoiri T."/>
            <person name="Kaku Y."/>
            <person name="Kodaira H."/>
            <person name="Kondo H."/>
            <person name="Sugawara M."/>
            <person name="Takahashi M."/>
            <person name="Kanda K."/>
            <person name="Yokoi T."/>
            <person name="Furuya T."/>
            <person name="Kikkawa E."/>
            <person name="Omura Y."/>
            <person name="Abe K."/>
            <person name="Kamihara K."/>
            <person name="Katsuta N."/>
            <person name="Sato K."/>
            <person name="Tanikawa M."/>
            <person name="Yamazaki M."/>
            <person name="Ninomiya K."/>
            <person name="Ishibashi T."/>
            <person name="Yamashita H."/>
            <person name="Murakawa K."/>
            <person name="Fujimori K."/>
            <person name="Tanai H."/>
            <person name="Kimata M."/>
            <person name="Watanabe M."/>
            <person name="Hiraoka S."/>
            <person name="Chiba Y."/>
            <person name="Ishida S."/>
            <person name="Ono Y."/>
            <person name="Takiguchi S."/>
            <person name="Watanabe S."/>
            <person name="Yosida M."/>
            <person name="Hotuta T."/>
            <person name="Kusano J."/>
            <person name="Kanehori K."/>
            <person name="Takahashi-Fujii A."/>
            <person name="Hara H."/>
            <person name="Tanase T.-O."/>
            <person name="Nomura Y."/>
            <person name="Togiya S."/>
            <person name="Komai F."/>
            <person name="Hara R."/>
            <person name="Takeuchi K."/>
            <person name="Arita M."/>
            <person name="Imose N."/>
            <person name="Musashino K."/>
            <person name="Yuuki H."/>
            <person name="Oshima A."/>
            <person name="Sasaki N."/>
            <person name="Aotsuka S."/>
            <person name="Yoshikawa Y."/>
            <person name="Matsunawa H."/>
            <person name="Ichihara T."/>
            <person name="Shiohata N."/>
            <person name="Sano S."/>
            <person name="Moriya S."/>
            <person name="Momiyama H."/>
            <person name="Satoh N."/>
            <person name="Takami S."/>
            <person name="Terashima Y."/>
            <person name="Suzuki O."/>
            <person name="Nakagawa S."/>
            <person name="Senoh A."/>
            <person name="Mizoguchi H."/>
            <person name="Goto Y."/>
            <person name="Shimizu F."/>
            <person name="Wakebe H."/>
            <person name="Hishigaki H."/>
            <person name="Watanabe T."/>
            <person name="Sugiyama A."/>
            <person name="Takemoto M."/>
            <person name="Kawakami B."/>
            <person name="Yamazaki M."/>
            <person name="Watanabe K."/>
            <person name="Kumagai A."/>
            <person name="Itakura S."/>
            <person name="Fukuzumi Y."/>
            <person name="Fujimori Y."/>
            <person name="Komiyama M."/>
            <person name="Tashiro H."/>
            <person name="Tanigami A."/>
            <person name="Fujiwara T."/>
            <person name="Ono T."/>
            <person name="Yamada K."/>
            <person name="Fujii Y."/>
            <person name="Ozaki K."/>
            <person name="Hirao M."/>
            <person name="Ohmori Y."/>
            <person name="Kawabata A."/>
            <person name="Hikiji T."/>
            <person name="Kobatake N."/>
            <person name="Inagaki H."/>
            <person name="Ikema Y."/>
            <person name="Okamoto S."/>
            <person name="Okitani R."/>
            <person name="Kawakami T."/>
            <person name="Noguchi S."/>
            <person name="Itoh T."/>
            <person name="Shigeta K."/>
            <person name="Senba T."/>
            <person name="Matsumura K."/>
            <person name="Nakajima Y."/>
            <person name="Mizuno T."/>
            <person name="Morinaga M."/>
            <person name="Sasaki M."/>
            <person name="Togashi T."/>
            <person name="Oyama M."/>
            <person name="Hata H."/>
            <person name="Watanabe M."/>
            <person name="Komatsu T."/>
            <person name="Mizushima-Sugano J."/>
            <person name="Satoh T."/>
            <person name="Shirai Y."/>
            <person name="Takahashi Y."/>
            <person name="Nakagawa K."/>
            <person name="Okumura K."/>
            <person name="Nagase T."/>
            <person name="Nomura N."/>
            <person name="Kikuchi H."/>
            <person name="Masuho Y."/>
            <person name="Yamashita R."/>
            <person name="Nakai K."/>
            <person name="Yada T."/>
            <person name="Nakamura Y."/>
            <person name="Ohara O."/>
            <person name="Isogai T."/>
            <person name="Sugano S."/>
        </authorList>
    </citation>
    <scope>NUCLEOTIDE SEQUENCE [LARGE SCALE MRNA]</scope>
    <source>
        <tissue>Testis</tissue>
    </source>
</reference>
<reference key="3">
    <citation type="journal article" date="2006" name="Nature">
        <title>The DNA sequence and biological annotation of human chromosome 1.</title>
        <authorList>
            <person name="Gregory S.G."/>
            <person name="Barlow K.F."/>
            <person name="McLay K.E."/>
            <person name="Kaul R."/>
            <person name="Swarbreck D."/>
            <person name="Dunham A."/>
            <person name="Scott C.E."/>
            <person name="Howe K.L."/>
            <person name="Woodfine K."/>
            <person name="Spencer C.C.A."/>
            <person name="Jones M.C."/>
            <person name="Gillson C."/>
            <person name="Searle S."/>
            <person name="Zhou Y."/>
            <person name="Kokocinski F."/>
            <person name="McDonald L."/>
            <person name="Evans R."/>
            <person name="Phillips K."/>
            <person name="Atkinson A."/>
            <person name="Cooper R."/>
            <person name="Jones C."/>
            <person name="Hall R.E."/>
            <person name="Andrews T.D."/>
            <person name="Lloyd C."/>
            <person name="Ainscough R."/>
            <person name="Almeida J.P."/>
            <person name="Ambrose K.D."/>
            <person name="Anderson F."/>
            <person name="Andrew R.W."/>
            <person name="Ashwell R.I.S."/>
            <person name="Aubin K."/>
            <person name="Babbage A.K."/>
            <person name="Bagguley C.L."/>
            <person name="Bailey J."/>
            <person name="Beasley H."/>
            <person name="Bethel G."/>
            <person name="Bird C.P."/>
            <person name="Bray-Allen S."/>
            <person name="Brown J.Y."/>
            <person name="Brown A.J."/>
            <person name="Buckley D."/>
            <person name="Burton J."/>
            <person name="Bye J."/>
            <person name="Carder C."/>
            <person name="Chapman J.C."/>
            <person name="Clark S.Y."/>
            <person name="Clarke G."/>
            <person name="Clee C."/>
            <person name="Cobley V."/>
            <person name="Collier R.E."/>
            <person name="Corby N."/>
            <person name="Coville G.J."/>
            <person name="Davies J."/>
            <person name="Deadman R."/>
            <person name="Dunn M."/>
            <person name="Earthrowl M."/>
            <person name="Ellington A.G."/>
            <person name="Errington H."/>
            <person name="Frankish A."/>
            <person name="Frankland J."/>
            <person name="French L."/>
            <person name="Garner P."/>
            <person name="Garnett J."/>
            <person name="Gay L."/>
            <person name="Ghori M.R.J."/>
            <person name="Gibson R."/>
            <person name="Gilby L.M."/>
            <person name="Gillett W."/>
            <person name="Glithero R.J."/>
            <person name="Grafham D.V."/>
            <person name="Griffiths C."/>
            <person name="Griffiths-Jones S."/>
            <person name="Grocock R."/>
            <person name="Hammond S."/>
            <person name="Harrison E.S.I."/>
            <person name="Hart E."/>
            <person name="Haugen E."/>
            <person name="Heath P.D."/>
            <person name="Holmes S."/>
            <person name="Holt K."/>
            <person name="Howden P.J."/>
            <person name="Hunt A.R."/>
            <person name="Hunt S.E."/>
            <person name="Hunter G."/>
            <person name="Isherwood J."/>
            <person name="James R."/>
            <person name="Johnson C."/>
            <person name="Johnson D."/>
            <person name="Joy A."/>
            <person name="Kay M."/>
            <person name="Kershaw J.K."/>
            <person name="Kibukawa M."/>
            <person name="Kimberley A.M."/>
            <person name="King A."/>
            <person name="Knights A.J."/>
            <person name="Lad H."/>
            <person name="Laird G."/>
            <person name="Lawlor S."/>
            <person name="Leongamornlert D.A."/>
            <person name="Lloyd D.M."/>
            <person name="Loveland J."/>
            <person name="Lovell J."/>
            <person name="Lush M.J."/>
            <person name="Lyne R."/>
            <person name="Martin S."/>
            <person name="Mashreghi-Mohammadi M."/>
            <person name="Matthews L."/>
            <person name="Matthews N.S.W."/>
            <person name="McLaren S."/>
            <person name="Milne S."/>
            <person name="Mistry S."/>
            <person name="Moore M.J.F."/>
            <person name="Nickerson T."/>
            <person name="O'Dell C.N."/>
            <person name="Oliver K."/>
            <person name="Palmeiri A."/>
            <person name="Palmer S.A."/>
            <person name="Parker A."/>
            <person name="Patel D."/>
            <person name="Pearce A.V."/>
            <person name="Peck A.I."/>
            <person name="Pelan S."/>
            <person name="Phelps K."/>
            <person name="Phillimore B.J."/>
            <person name="Plumb R."/>
            <person name="Rajan J."/>
            <person name="Raymond C."/>
            <person name="Rouse G."/>
            <person name="Saenphimmachak C."/>
            <person name="Sehra H.K."/>
            <person name="Sheridan E."/>
            <person name="Shownkeen R."/>
            <person name="Sims S."/>
            <person name="Skuce C.D."/>
            <person name="Smith M."/>
            <person name="Steward C."/>
            <person name="Subramanian S."/>
            <person name="Sycamore N."/>
            <person name="Tracey A."/>
            <person name="Tromans A."/>
            <person name="Van Helmond Z."/>
            <person name="Wall M."/>
            <person name="Wallis J.M."/>
            <person name="White S."/>
            <person name="Whitehead S.L."/>
            <person name="Wilkinson J.E."/>
            <person name="Willey D.L."/>
            <person name="Williams H."/>
            <person name="Wilming L."/>
            <person name="Wray P.W."/>
            <person name="Wu Z."/>
            <person name="Coulson A."/>
            <person name="Vaudin M."/>
            <person name="Sulston J.E."/>
            <person name="Durbin R.M."/>
            <person name="Hubbard T."/>
            <person name="Wooster R."/>
            <person name="Dunham I."/>
            <person name="Carter N.P."/>
            <person name="McVean G."/>
            <person name="Ross M.T."/>
            <person name="Harrow J."/>
            <person name="Olson M.V."/>
            <person name="Beck S."/>
            <person name="Rogers J."/>
            <person name="Bentley D.R."/>
        </authorList>
    </citation>
    <scope>NUCLEOTIDE SEQUENCE [LARGE SCALE GENOMIC DNA]</scope>
</reference>
<organism>
    <name type="scientific">Homo sapiens</name>
    <name type="common">Human</name>
    <dbReference type="NCBI Taxonomy" id="9606"/>
    <lineage>
        <taxon>Eukaryota</taxon>
        <taxon>Metazoa</taxon>
        <taxon>Chordata</taxon>
        <taxon>Craniata</taxon>
        <taxon>Vertebrata</taxon>
        <taxon>Euteleostomi</taxon>
        <taxon>Mammalia</taxon>
        <taxon>Eutheria</taxon>
        <taxon>Euarchontoglires</taxon>
        <taxon>Primates</taxon>
        <taxon>Haplorrhini</taxon>
        <taxon>Catarrhini</taxon>
        <taxon>Hominidae</taxon>
        <taxon>Homo</taxon>
    </lineage>
</organism>
<gene>
    <name type="primary">PIN1P1</name>
    <name type="synonym">PIN1L</name>
</gene>
<protein>
    <recommendedName>
        <fullName>Putative PIN1-like protein</fullName>
    </recommendedName>
    <alternativeName>
        <fullName>Peptidylprolyl cis-trans isomerase NIMA-interacting 1 pseudogene 1</fullName>
    </alternativeName>
</protein>
<dbReference type="EMBL" id="U82382">
    <property type="protein sequence ID" value="AAB81333.1"/>
    <property type="molecule type" value="mRNA"/>
</dbReference>
<dbReference type="EMBL" id="AK314840">
    <property type="protein sequence ID" value="BAG37358.1"/>
    <property type="molecule type" value="mRNA"/>
</dbReference>
<dbReference type="EMBL" id="AL391728">
    <property type="status" value="NOT_ANNOTATED_CDS"/>
    <property type="molecule type" value="Genomic_DNA"/>
</dbReference>
<dbReference type="MINT" id="O15428"/>
<dbReference type="iPTMnet" id="O15428"/>
<dbReference type="PhosphoSitePlus" id="O15428"/>
<dbReference type="BioMuta" id="HGNC:8989"/>
<dbReference type="jPOST" id="O15428"/>
<dbReference type="MassIVE" id="O15428"/>
<dbReference type="PeptideAtlas" id="O15428"/>
<dbReference type="ProteomicsDB" id="48656"/>
<dbReference type="AGR" id="HGNC:8989"/>
<dbReference type="GeneCards" id="PIN1P1"/>
<dbReference type="HGNC" id="HGNC:8989">
    <property type="gene designation" value="PIN1P1"/>
</dbReference>
<dbReference type="MIM" id="602051">
    <property type="type" value="gene"/>
</dbReference>
<dbReference type="neXtProt" id="NX_O15428"/>
<dbReference type="InParanoid" id="O15428"/>
<dbReference type="PAN-GO" id="O15428">
    <property type="GO annotations" value="3 GO annotations based on evolutionary models"/>
</dbReference>
<dbReference type="PhylomeDB" id="O15428"/>
<dbReference type="PathwayCommons" id="O15428"/>
<dbReference type="SignaLink" id="O15428"/>
<dbReference type="Pharos" id="O15428">
    <property type="development level" value="Tdark"/>
</dbReference>
<dbReference type="Proteomes" id="UP000005640">
    <property type="component" value="Unplaced"/>
</dbReference>
<dbReference type="RNAct" id="O15428">
    <property type="molecule type" value="protein"/>
</dbReference>
<dbReference type="CDD" id="cd00201">
    <property type="entry name" value="WW"/>
    <property type="match status" value="1"/>
</dbReference>
<dbReference type="FunFam" id="2.20.70.10:FF:000046">
    <property type="entry name" value="Peptidyl-prolyl cis-trans isomerase"/>
    <property type="match status" value="1"/>
</dbReference>
<dbReference type="Gene3D" id="2.20.70.10">
    <property type="match status" value="1"/>
</dbReference>
<dbReference type="InterPro" id="IPR001202">
    <property type="entry name" value="WW_dom"/>
</dbReference>
<dbReference type="InterPro" id="IPR036020">
    <property type="entry name" value="WW_dom_sf"/>
</dbReference>
<dbReference type="Pfam" id="PF00397">
    <property type="entry name" value="WW"/>
    <property type="match status" value="1"/>
</dbReference>
<dbReference type="SMART" id="SM00456">
    <property type="entry name" value="WW"/>
    <property type="match status" value="1"/>
</dbReference>
<dbReference type="SUPFAM" id="SSF51045">
    <property type="entry name" value="WW domain"/>
    <property type="match status" value="1"/>
</dbReference>
<dbReference type="PROSITE" id="PS01159">
    <property type="entry name" value="WW_DOMAIN_1"/>
    <property type="match status" value="1"/>
</dbReference>
<dbReference type="PROSITE" id="PS50020">
    <property type="entry name" value="WW_DOMAIN_2"/>
    <property type="match status" value="1"/>
</dbReference>